<proteinExistence type="predicted"/>
<name>REPI_ECOLX</name>
<reference key="1">
    <citation type="journal article" date="1986" name="Nucleic Acids Res.">
        <title>Copy-number of broad host-range plasmid R1162 is regulated by a small RNA.</title>
        <authorList>
            <person name="Kim K."/>
            <person name="Meyer R.J."/>
        </authorList>
    </citation>
    <scope>NUCLEOTIDE SEQUENCE [GENOMIC DNA]</scope>
</reference>
<accession>P05830</accession>
<keyword id="KW-0614">Plasmid</keyword>
<keyword id="KW-0615">Plasmid copy control</keyword>
<gene>
    <name type="primary">repI</name>
</gene>
<geneLocation type="plasmid">
    <name>R1162</name>
</geneLocation>
<sequence>MATHKPINILEAFAAAPPPLDYVLPNMVAGTVGALVSPGGAGKSMLALQLAAQIAGGPDLLEVGELPTGPVIYLPAEDPPTAIHHRLHALGAH</sequence>
<feature type="chain" id="PRO_0000068332" description="Regulatory protein RepI">
    <location>
        <begin position="1"/>
        <end position="93" status="greater than"/>
    </location>
</feature>
<feature type="non-terminal residue">
    <location>
        <position position="93"/>
    </location>
</feature>
<dbReference type="EMBL" id="X04499">
    <property type="protein sequence ID" value="CAA28184.1"/>
    <property type="molecule type" value="Genomic_DNA"/>
</dbReference>
<dbReference type="SMR" id="P05830"/>
<dbReference type="GO" id="GO:0006276">
    <property type="term" value="P:plasmid maintenance"/>
    <property type="evidence" value="ECO:0007669"/>
    <property type="project" value="UniProtKB-KW"/>
</dbReference>
<dbReference type="Gene3D" id="3.40.50.300">
    <property type="entry name" value="P-loop containing nucleotide triphosphate hydrolases"/>
    <property type="match status" value="1"/>
</dbReference>
<dbReference type="InterPro" id="IPR027417">
    <property type="entry name" value="P-loop_NTPase"/>
</dbReference>
<dbReference type="Pfam" id="PF13481">
    <property type="entry name" value="AAA_25"/>
    <property type="match status" value="1"/>
</dbReference>
<dbReference type="SUPFAM" id="SSF52540">
    <property type="entry name" value="P-loop containing nucleoside triphosphate hydrolases"/>
    <property type="match status" value="1"/>
</dbReference>
<comment type="function">
    <text>This protein is involved in regulating the plasmid copy-number. Increasing the level of this protein results in a higher plasmid copy-number.</text>
</comment>
<protein>
    <recommendedName>
        <fullName>Regulatory protein RepI</fullName>
    </recommendedName>
</protein>
<organism>
    <name type="scientific">Escherichia coli</name>
    <dbReference type="NCBI Taxonomy" id="562"/>
    <lineage>
        <taxon>Bacteria</taxon>
        <taxon>Pseudomonadati</taxon>
        <taxon>Pseudomonadota</taxon>
        <taxon>Gammaproteobacteria</taxon>
        <taxon>Enterobacterales</taxon>
        <taxon>Enterobacteriaceae</taxon>
        <taxon>Escherichia</taxon>
    </lineage>
</organism>